<sequence length="296" mass="34878">MICIECGYSNIDCLYSKYKSDYIKLSVCPECNKIADKYIEYDSVILFLDILLLKRQAYKHLAYNLTEMEMEIGSSTNFHINDNTNFKFFHTYRKLMKLIFMILSFEVYLTWANEEKLLIHSQLINLIFNQSVVYQYLFFIIKSSLENLILNLSLQLILRLGYKWGQGPQKINGNIRDKELFGYKTSVLLVTTMVSGSIRLFPILMFIWPYDNISITKPLINLIAFINIVEALRVVTSLGYVELILSLAFSIVIRNIVSKSLLVLIVRLFLDFNFTEVYYNEMYQLYSQIQTYIRWI</sequence>
<name>ARV1_CANAL</name>
<reference key="1">
    <citation type="journal article" date="2004" name="Proc. Natl. Acad. Sci. U.S.A.">
        <title>The diploid genome sequence of Candida albicans.</title>
        <authorList>
            <person name="Jones T."/>
            <person name="Federspiel N.A."/>
            <person name="Chibana H."/>
            <person name="Dungan J."/>
            <person name="Kalman S."/>
            <person name="Magee B.B."/>
            <person name="Newport G."/>
            <person name="Thorstenson Y.R."/>
            <person name="Agabian N."/>
            <person name="Magee P.T."/>
            <person name="Davis R.W."/>
            <person name="Scherer S."/>
        </authorList>
    </citation>
    <scope>NUCLEOTIDE SEQUENCE [LARGE SCALE GENOMIC DNA]</scope>
    <source>
        <strain>SC5314 / ATCC MYA-2876</strain>
    </source>
</reference>
<reference key="2">
    <citation type="journal article" date="2007" name="Genome Biol.">
        <title>Assembly of the Candida albicans genome into sixteen supercontigs aligned on the eight chromosomes.</title>
        <authorList>
            <person name="van het Hoog M."/>
            <person name="Rast T.J."/>
            <person name="Martchenko M."/>
            <person name="Grindle S."/>
            <person name="Dignard D."/>
            <person name="Hogues H."/>
            <person name="Cuomo C."/>
            <person name="Berriman M."/>
            <person name="Scherer S."/>
            <person name="Magee B.B."/>
            <person name="Whiteway M."/>
            <person name="Chibana H."/>
            <person name="Nantel A."/>
            <person name="Magee P.T."/>
        </authorList>
    </citation>
    <scope>GENOME REANNOTATION</scope>
    <source>
        <strain>SC5314 / ATCC MYA-2876</strain>
    </source>
</reference>
<reference key="3">
    <citation type="journal article" date="2013" name="Genome Biol.">
        <title>Assembly of a phased diploid Candida albicans genome facilitates allele-specific measurements and provides a simple model for repeat and indel structure.</title>
        <authorList>
            <person name="Muzzey D."/>
            <person name="Schwartz K."/>
            <person name="Weissman J.S."/>
            <person name="Sherlock G."/>
        </authorList>
    </citation>
    <scope>NUCLEOTIDE SEQUENCE [LARGE SCALE GENOMIC DNA]</scope>
    <scope>GENOME REANNOTATION</scope>
    <source>
        <strain>SC5314 / ATCC MYA-2876</strain>
    </source>
</reference>
<reference key="4">
    <citation type="journal article" date="2012" name="Fungal Genet. Biol.">
        <title>Arv1 lipid transporter function is conserved between pathogenic and nonpathogenic fungi.</title>
        <authorList>
            <person name="Gallo-Ebert C."/>
            <person name="McCourt P.C."/>
            <person name="Donigan M."/>
            <person name="Villasmil M.L."/>
            <person name="Chen W."/>
            <person name="Pandya D."/>
            <person name="Franco J."/>
            <person name="Romano D."/>
            <person name="Chadwick S.G."/>
            <person name="Gygax S.E."/>
            <person name="Nickels J.T. Jr."/>
        </authorList>
    </citation>
    <scope>FUNCTION</scope>
    <scope>DISRUPTION PHENOTYPE</scope>
</reference>
<keyword id="KW-0256">Endoplasmic reticulum</keyword>
<keyword id="KW-0325">Glycoprotein</keyword>
<keyword id="KW-0333">Golgi apparatus</keyword>
<keyword id="KW-0443">Lipid metabolism</keyword>
<keyword id="KW-0445">Lipid transport</keyword>
<keyword id="KW-0472">Membrane</keyword>
<keyword id="KW-1185">Reference proteome</keyword>
<keyword id="KW-0746">Sphingolipid metabolism</keyword>
<keyword id="KW-0812">Transmembrane</keyword>
<keyword id="KW-1133">Transmembrane helix</keyword>
<keyword id="KW-0813">Transport</keyword>
<keyword id="KW-0843">Virulence</keyword>
<protein>
    <recommendedName>
        <fullName>Protein ARV1</fullName>
    </recommendedName>
</protein>
<organism>
    <name type="scientific">Candida albicans (strain SC5314 / ATCC MYA-2876)</name>
    <name type="common">Yeast</name>
    <dbReference type="NCBI Taxonomy" id="237561"/>
    <lineage>
        <taxon>Eukaryota</taxon>
        <taxon>Fungi</taxon>
        <taxon>Dikarya</taxon>
        <taxon>Ascomycota</taxon>
        <taxon>Saccharomycotina</taxon>
        <taxon>Pichiomycetes</taxon>
        <taxon>Debaryomycetaceae</taxon>
        <taxon>Candida/Lodderomyces clade</taxon>
        <taxon>Candida</taxon>
    </lineage>
</organism>
<proteinExistence type="inferred from homology"/>
<accession>Q5ANH2</accession>
<accession>A0A1D8PK62</accession>
<gene>
    <name type="primary">ARV1</name>
    <name type="ordered locus">CAALFM_C304710WA</name>
    <name type="ORF">CaO19.13352</name>
    <name type="ORF">CaO19.5931</name>
</gene>
<evidence type="ECO:0000250" key="1"/>
<evidence type="ECO:0000255" key="2"/>
<evidence type="ECO:0000269" key="3">
    <source>
    </source>
</evidence>
<evidence type="ECO:0000305" key="4"/>
<dbReference type="EMBL" id="CP017625">
    <property type="protein sequence ID" value="AOW28488.1"/>
    <property type="molecule type" value="Genomic_DNA"/>
</dbReference>
<dbReference type="RefSeq" id="XP_723143.1">
    <property type="nucleotide sequence ID" value="XM_718050.1"/>
</dbReference>
<dbReference type="FunCoup" id="Q5ANH2">
    <property type="interactions" value="37"/>
</dbReference>
<dbReference type="STRING" id="237561.Q5ANH2"/>
<dbReference type="GlyCosmos" id="Q5ANH2">
    <property type="glycosylation" value="3 sites, No reported glycans"/>
</dbReference>
<dbReference type="EnsemblFungi" id="C3_04710W_A-T">
    <property type="protein sequence ID" value="C3_04710W_A-T-p1"/>
    <property type="gene ID" value="C3_04710W_A"/>
</dbReference>
<dbReference type="GeneID" id="3635248"/>
<dbReference type="KEGG" id="cal:CAALFM_C304710WA"/>
<dbReference type="CGD" id="CAL0000182745">
    <property type="gene designation" value="ARV1"/>
</dbReference>
<dbReference type="VEuPathDB" id="FungiDB:C3_04710W_A"/>
<dbReference type="eggNOG" id="KOG3134">
    <property type="taxonomic scope" value="Eukaryota"/>
</dbReference>
<dbReference type="HOGENOM" id="CLU_057366_2_0_1"/>
<dbReference type="InParanoid" id="Q5ANH2"/>
<dbReference type="OMA" id="MLDMNVK"/>
<dbReference type="OrthoDB" id="2192830at2759"/>
<dbReference type="PHI-base" id="PHI:10624"/>
<dbReference type="PHI-base" id="PHI:11159"/>
<dbReference type="PHI-base" id="PHI:6660"/>
<dbReference type="PRO" id="PR:Q5ANH2"/>
<dbReference type="Proteomes" id="UP000000559">
    <property type="component" value="Chromosome 3"/>
</dbReference>
<dbReference type="GO" id="GO:0032541">
    <property type="term" value="C:cortical endoplasmic reticulum"/>
    <property type="evidence" value="ECO:0000318"/>
    <property type="project" value="GO_Central"/>
</dbReference>
<dbReference type="GO" id="GO:0005789">
    <property type="term" value="C:endoplasmic reticulum membrane"/>
    <property type="evidence" value="ECO:0007669"/>
    <property type="project" value="UniProtKB-SubCell"/>
</dbReference>
<dbReference type="GO" id="GO:0005794">
    <property type="term" value="C:Golgi apparatus"/>
    <property type="evidence" value="ECO:0000318"/>
    <property type="project" value="GO_Central"/>
</dbReference>
<dbReference type="GO" id="GO:0000139">
    <property type="term" value="C:Golgi membrane"/>
    <property type="evidence" value="ECO:0007669"/>
    <property type="project" value="UniProtKB-SubCell"/>
</dbReference>
<dbReference type="GO" id="GO:0032366">
    <property type="term" value="P:intracellular sterol transport"/>
    <property type="evidence" value="ECO:0000318"/>
    <property type="project" value="GO_Central"/>
</dbReference>
<dbReference type="GO" id="GO:0097036">
    <property type="term" value="P:regulation of plasma membrane sterol distribution"/>
    <property type="evidence" value="ECO:0000318"/>
    <property type="project" value="GO_Central"/>
</dbReference>
<dbReference type="GO" id="GO:0006665">
    <property type="term" value="P:sphingolipid metabolic process"/>
    <property type="evidence" value="ECO:0000318"/>
    <property type="project" value="GO_Central"/>
</dbReference>
<dbReference type="GO" id="GO:0016125">
    <property type="term" value="P:sterol metabolic process"/>
    <property type="evidence" value="ECO:0000318"/>
    <property type="project" value="GO_Central"/>
</dbReference>
<dbReference type="InterPro" id="IPR007290">
    <property type="entry name" value="Arv1"/>
</dbReference>
<dbReference type="PANTHER" id="PTHR14467">
    <property type="entry name" value="ARV1"/>
    <property type="match status" value="1"/>
</dbReference>
<dbReference type="PANTHER" id="PTHR14467:SF0">
    <property type="entry name" value="PROTEIN ARV1"/>
    <property type="match status" value="1"/>
</dbReference>
<dbReference type="Pfam" id="PF04161">
    <property type="entry name" value="Arv1"/>
    <property type="match status" value="1"/>
</dbReference>
<comment type="function">
    <text evidence="3">Mediator of sterol homeostasis involved in sterol uptake, trafficking and distribution into membranes. Also regulates the sphingolipid metabolism. Required for growth during anaerobiosis and sterol uptake. Plays a role in pathogenesis.</text>
</comment>
<comment type="subcellular location">
    <subcellularLocation>
        <location evidence="1">Endoplasmic reticulum membrane</location>
        <topology evidence="1">Multi-pass membrane protein</topology>
    </subcellularLocation>
    <subcellularLocation>
        <location evidence="1">Golgi apparatus membrane</location>
        <topology evidence="1">Multi-pass membrane protein</topology>
    </subcellularLocation>
</comment>
<comment type="disruption phenotype">
    <text evidence="3">Leads to avirulence using a BALB/c disseminated mouse model.</text>
</comment>
<comment type="similarity">
    <text evidence="4">Belongs to the ARV1 family.</text>
</comment>
<feature type="chain" id="PRO_0000422797" description="Protein ARV1">
    <location>
        <begin position="1"/>
        <end position="296"/>
    </location>
</feature>
<feature type="transmembrane region" description="Helical" evidence="2">
    <location>
        <begin position="99"/>
        <end position="119"/>
    </location>
</feature>
<feature type="transmembrane region" description="Helical" evidence="2">
    <location>
        <begin position="121"/>
        <end position="141"/>
    </location>
</feature>
<feature type="transmembrane region" description="Helical" evidence="2">
    <location>
        <begin position="187"/>
        <end position="207"/>
    </location>
</feature>
<feature type="transmembrane region" description="Helical" evidence="2">
    <location>
        <begin position="212"/>
        <end position="232"/>
    </location>
</feature>
<feature type="transmembrane region" description="Helical" evidence="2">
    <location>
        <begin position="233"/>
        <end position="253"/>
    </location>
</feature>
<feature type="glycosylation site" description="N-linked (GlcNAc...) asparagine" evidence="2">
    <location>
        <position position="64"/>
    </location>
</feature>
<feature type="glycosylation site" description="N-linked (GlcNAc...) asparagine" evidence="2">
    <location>
        <position position="151"/>
    </location>
</feature>
<feature type="glycosylation site" description="N-linked (GlcNAc...) asparagine" evidence="2">
    <location>
        <position position="273"/>
    </location>
</feature>